<gene>
    <name evidence="7" type="primary">MEKK3</name>
    <name evidence="6" type="synonym">MAP3Kb3</name>
    <name type="synonym">MAPKKK10</name>
    <name evidence="9" type="ordered locus">At4g08470</name>
    <name evidence="10" type="ORF">T15F16.2</name>
</gene>
<organism>
    <name type="scientific">Arabidopsis thaliana</name>
    <name type="common">Mouse-ear cress</name>
    <dbReference type="NCBI Taxonomy" id="3702"/>
    <lineage>
        <taxon>Eukaryota</taxon>
        <taxon>Viridiplantae</taxon>
        <taxon>Streptophyta</taxon>
        <taxon>Embryophyta</taxon>
        <taxon>Tracheophyta</taxon>
        <taxon>Spermatophyta</taxon>
        <taxon>Magnoliopsida</taxon>
        <taxon>eudicotyledons</taxon>
        <taxon>Gunneridae</taxon>
        <taxon>Pentapetalae</taxon>
        <taxon>rosids</taxon>
        <taxon>malvids</taxon>
        <taxon>Brassicales</taxon>
        <taxon>Brassicaceae</taxon>
        <taxon>Camelineae</taxon>
        <taxon>Arabidopsis</taxon>
    </lineage>
</organism>
<reference key="1">
    <citation type="journal article" date="1999" name="Nature">
        <title>Sequence and analysis of chromosome 4 of the plant Arabidopsis thaliana.</title>
        <authorList>
            <person name="Mayer K.F.X."/>
            <person name="Schueller C."/>
            <person name="Wambutt R."/>
            <person name="Murphy G."/>
            <person name="Volckaert G."/>
            <person name="Pohl T."/>
            <person name="Duesterhoeft A."/>
            <person name="Stiekema W."/>
            <person name="Entian K.-D."/>
            <person name="Terryn N."/>
            <person name="Harris B."/>
            <person name="Ansorge W."/>
            <person name="Brandt P."/>
            <person name="Grivell L.A."/>
            <person name="Rieger M."/>
            <person name="Weichselgartner M."/>
            <person name="de Simone V."/>
            <person name="Obermaier B."/>
            <person name="Mache R."/>
            <person name="Mueller M."/>
            <person name="Kreis M."/>
            <person name="Delseny M."/>
            <person name="Puigdomenech P."/>
            <person name="Watson M."/>
            <person name="Schmidtheini T."/>
            <person name="Reichert B."/>
            <person name="Portetelle D."/>
            <person name="Perez-Alonso M."/>
            <person name="Boutry M."/>
            <person name="Bancroft I."/>
            <person name="Vos P."/>
            <person name="Hoheisel J."/>
            <person name="Zimmermann W."/>
            <person name="Wedler H."/>
            <person name="Ridley P."/>
            <person name="Langham S.-A."/>
            <person name="McCullagh B."/>
            <person name="Bilham L."/>
            <person name="Robben J."/>
            <person name="van der Schueren J."/>
            <person name="Grymonprez B."/>
            <person name="Chuang Y.-J."/>
            <person name="Vandenbussche F."/>
            <person name="Braeken M."/>
            <person name="Weltjens I."/>
            <person name="Voet M."/>
            <person name="Bastiaens I."/>
            <person name="Aert R."/>
            <person name="Defoor E."/>
            <person name="Weitzenegger T."/>
            <person name="Bothe G."/>
            <person name="Ramsperger U."/>
            <person name="Hilbert H."/>
            <person name="Braun M."/>
            <person name="Holzer E."/>
            <person name="Brandt A."/>
            <person name="Peters S."/>
            <person name="van Staveren M."/>
            <person name="Dirkse W."/>
            <person name="Mooijman P."/>
            <person name="Klein Lankhorst R."/>
            <person name="Rose M."/>
            <person name="Hauf J."/>
            <person name="Koetter P."/>
            <person name="Berneiser S."/>
            <person name="Hempel S."/>
            <person name="Feldpausch M."/>
            <person name="Lamberth S."/>
            <person name="Van den Daele H."/>
            <person name="De Keyser A."/>
            <person name="Buysshaert C."/>
            <person name="Gielen J."/>
            <person name="Villarroel R."/>
            <person name="De Clercq R."/>
            <person name="van Montagu M."/>
            <person name="Rogers J."/>
            <person name="Cronin A."/>
            <person name="Quail M.A."/>
            <person name="Bray-Allen S."/>
            <person name="Clark L."/>
            <person name="Doggett J."/>
            <person name="Hall S."/>
            <person name="Kay M."/>
            <person name="Lennard N."/>
            <person name="McLay K."/>
            <person name="Mayes R."/>
            <person name="Pettett A."/>
            <person name="Rajandream M.A."/>
            <person name="Lyne M."/>
            <person name="Benes V."/>
            <person name="Rechmann S."/>
            <person name="Borkova D."/>
            <person name="Bloecker H."/>
            <person name="Scharfe M."/>
            <person name="Grimm M."/>
            <person name="Loehnert T.-H."/>
            <person name="Dose S."/>
            <person name="de Haan M."/>
            <person name="Maarse A.C."/>
            <person name="Schaefer M."/>
            <person name="Mueller-Auer S."/>
            <person name="Gabel C."/>
            <person name="Fuchs M."/>
            <person name="Fartmann B."/>
            <person name="Granderath K."/>
            <person name="Dauner D."/>
            <person name="Herzl A."/>
            <person name="Neumann S."/>
            <person name="Argiriou A."/>
            <person name="Vitale D."/>
            <person name="Liguori R."/>
            <person name="Piravandi E."/>
            <person name="Massenet O."/>
            <person name="Quigley F."/>
            <person name="Clabauld G."/>
            <person name="Muendlein A."/>
            <person name="Felber R."/>
            <person name="Schnabl S."/>
            <person name="Hiller R."/>
            <person name="Schmidt W."/>
            <person name="Lecharny A."/>
            <person name="Aubourg S."/>
            <person name="Chefdor F."/>
            <person name="Cooke R."/>
            <person name="Berger C."/>
            <person name="Monfort A."/>
            <person name="Casacuberta E."/>
            <person name="Gibbons T."/>
            <person name="Weber N."/>
            <person name="Vandenbol M."/>
            <person name="Bargues M."/>
            <person name="Terol J."/>
            <person name="Torres A."/>
            <person name="Perez-Perez A."/>
            <person name="Purnelle B."/>
            <person name="Bent E."/>
            <person name="Johnson S."/>
            <person name="Tacon D."/>
            <person name="Jesse T."/>
            <person name="Heijnen L."/>
            <person name="Schwarz S."/>
            <person name="Scholler P."/>
            <person name="Heber S."/>
            <person name="Francs P."/>
            <person name="Bielke C."/>
            <person name="Frishman D."/>
            <person name="Haase D."/>
            <person name="Lemcke K."/>
            <person name="Mewes H.-W."/>
            <person name="Stocker S."/>
            <person name="Zaccaria P."/>
            <person name="Bevan M."/>
            <person name="Wilson R.K."/>
            <person name="de la Bastide M."/>
            <person name="Habermann K."/>
            <person name="Parnell L."/>
            <person name="Dedhia N."/>
            <person name="Gnoj L."/>
            <person name="Schutz K."/>
            <person name="Huang E."/>
            <person name="Spiegel L."/>
            <person name="Sekhon M."/>
            <person name="Murray J."/>
            <person name="Sheet P."/>
            <person name="Cordes M."/>
            <person name="Abu-Threideh J."/>
            <person name="Stoneking T."/>
            <person name="Kalicki J."/>
            <person name="Graves T."/>
            <person name="Harmon G."/>
            <person name="Edwards J."/>
            <person name="Latreille P."/>
            <person name="Courtney L."/>
            <person name="Cloud J."/>
            <person name="Abbott A."/>
            <person name="Scott K."/>
            <person name="Johnson D."/>
            <person name="Minx P."/>
            <person name="Bentley D."/>
            <person name="Fulton B."/>
            <person name="Miller N."/>
            <person name="Greco T."/>
            <person name="Kemp K."/>
            <person name="Kramer J."/>
            <person name="Fulton L."/>
            <person name="Mardis E."/>
            <person name="Dante M."/>
            <person name="Pepin K."/>
            <person name="Hillier L.W."/>
            <person name="Nelson J."/>
            <person name="Spieth J."/>
            <person name="Ryan E."/>
            <person name="Andrews S."/>
            <person name="Geisel C."/>
            <person name="Layman D."/>
            <person name="Du H."/>
            <person name="Ali J."/>
            <person name="Berghoff A."/>
            <person name="Jones K."/>
            <person name="Drone K."/>
            <person name="Cotton M."/>
            <person name="Joshu C."/>
            <person name="Antonoiu B."/>
            <person name="Zidanic M."/>
            <person name="Strong C."/>
            <person name="Sun H."/>
            <person name="Lamar B."/>
            <person name="Yordan C."/>
            <person name="Ma P."/>
            <person name="Zhong J."/>
            <person name="Preston R."/>
            <person name="Vil D."/>
            <person name="Shekher M."/>
            <person name="Matero A."/>
            <person name="Shah R."/>
            <person name="Swaby I.K."/>
            <person name="O'Shaughnessy A."/>
            <person name="Rodriguez M."/>
            <person name="Hoffman J."/>
            <person name="Till S."/>
            <person name="Granat S."/>
            <person name="Shohdy N."/>
            <person name="Hasegawa A."/>
            <person name="Hameed A."/>
            <person name="Lodhi M."/>
            <person name="Johnson A."/>
            <person name="Chen E."/>
            <person name="Marra M.A."/>
            <person name="Martienssen R."/>
            <person name="McCombie W.R."/>
        </authorList>
    </citation>
    <scope>NUCLEOTIDE SEQUENCE [LARGE SCALE GENOMIC DNA]</scope>
    <source>
        <strain>cv. Columbia</strain>
    </source>
</reference>
<reference key="2">
    <citation type="journal article" date="2017" name="Plant J.">
        <title>Araport11: a complete reannotation of the Arabidopsis thaliana reference genome.</title>
        <authorList>
            <person name="Cheng C.Y."/>
            <person name="Krishnakumar V."/>
            <person name="Chan A.P."/>
            <person name="Thibaud-Nissen F."/>
            <person name="Schobel S."/>
            <person name="Town C.D."/>
        </authorList>
    </citation>
    <scope>GENOME REANNOTATION</scope>
    <source>
        <strain>cv. Columbia</strain>
    </source>
</reference>
<reference key="3">
    <citation type="journal article" date="2003" name="Science">
        <title>Empirical analysis of transcriptional activity in the Arabidopsis genome.</title>
        <authorList>
            <person name="Yamada K."/>
            <person name="Lim J."/>
            <person name="Dale J.M."/>
            <person name="Chen H."/>
            <person name="Shinn P."/>
            <person name="Palm C.J."/>
            <person name="Southwick A.M."/>
            <person name="Wu H.C."/>
            <person name="Kim C.J."/>
            <person name="Nguyen M."/>
            <person name="Pham P.K."/>
            <person name="Cheuk R.F."/>
            <person name="Karlin-Newmann G."/>
            <person name="Liu S.X."/>
            <person name="Lam B."/>
            <person name="Sakano H."/>
            <person name="Wu T."/>
            <person name="Yu G."/>
            <person name="Miranda M."/>
            <person name="Quach H.L."/>
            <person name="Tripp M."/>
            <person name="Chang C.H."/>
            <person name="Lee J.M."/>
            <person name="Toriumi M.J."/>
            <person name="Chan M.M."/>
            <person name="Tang C.C."/>
            <person name="Onodera C.S."/>
            <person name="Deng J.M."/>
            <person name="Akiyama K."/>
            <person name="Ansari Y."/>
            <person name="Arakawa T."/>
            <person name="Banh J."/>
            <person name="Banno F."/>
            <person name="Bowser L."/>
            <person name="Brooks S.Y."/>
            <person name="Carninci P."/>
            <person name="Chao Q."/>
            <person name="Choy N."/>
            <person name="Enju A."/>
            <person name="Goldsmith A.D."/>
            <person name="Gurjal M."/>
            <person name="Hansen N.F."/>
            <person name="Hayashizaki Y."/>
            <person name="Johnson-Hopson C."/>
            <person name="Hsuan V.W."/>
            <person name="Iida K."/>
            <person name="Karnes M."/>
            <person name="Khan S."/>
            <person name="Koesema E."/>
            <person name="Ishida J."/>
            <person name="Jiang P.X."/>
            <person name="Jones T."/>
            <person name="Kawai J."/>
            <person name="Kamiya A."/>
            <person name="Meyers C."/>
            <person name="Nakajima M."/>
            <person name="Narusaka M."/>
            <person name="Seki M."/>
            <person name="Sakurai T."/>
            <person name="Satou M."/>
            <person name="Tamse R."/>
            <person name="Vaysberg M."/>
            <person name="Wallender E.K."/>
            <person name="Wong C."/>
            <person name="Yamamura Y."/>
            <person name="Yuan S."/>
            <person name="Shinozaki K."/>
            <person name="Davis R.W."/>
            <person name="Theologis A."/>
            <person name="Ecker J.R."/>
        </authorList>
    </citation>
    <scope>NUCLEOTIDE SEQUENCE [LARGE SCALE MRNA]</scope>
    <source>
        <strain>cv. Columbia</strain>
    </source>
</reference>
<reference key="4">
    <citation type="submission" date="2005-02" db="EMBL/GenBank/DDBJ databases">
        <title>Arabidopsis ORF clones.</title>
        <authorList>
            <person name="Cheuk R.F."/>
            <person name="Chen H."/>
            <person name="Kim C.J."/>
            <person name="Shinn P."/>
            <person name="Ecker J.R."/>
        </authorList>
    </citation>
    <scope>NUCLEOTIDE SEQUENCE [LARGE SCALE MRNA]</scope>
    <source>
        <strain>cv. Columbia</strain>
    </source>
</reference>
<reference key="5">
    <citation type="submission" date="2006-07" db="EMBL/GenBank/DDBJ databases">
        <title>Large-scale analysis of RIKEN Arabidopsis full-length (RAFL) cDNAs.</title>
        <authorList>
            <person name="Totoki Y."/>
            <person name="Seki M."/>
            <person name="Ishida J."/>
            <person name="Nakajima M."/>
            <person name="Enju A."/>
            <person name="Kamiya A."/>
            <person name="Narusaka M."/>
            <person name="Shin-i T."/>
            <person name="Nakagawa M."/>
            <person name="Sakamoto N."/>
            <person name="Oishi K."/>
            <person name="Kohara Y."/>
            <person name="Kobayashi M."/>
            <person name="Toyoda A."/>
            <person name="Sakaki Y."/>
            <person name="Sakurai T."/>
            <person name="Iida K."/>
            <person name="Akiyama K."/>
            <person name="Satou M."/>
            <person name="Toyoda T."/>
            <person name="Konagaya A."/>
            <person name="Carninci P."/>
            <person name="Kawai J."/>
            <person name="Hayashizaki Y."/>
            <person name="Shinozaki K."/>
        </authorList>
    </citation>
    <scope>NUCLEOTIDE SEQUENCE [LARGE SCALE MRNA]</scope>
    <source>
        <strain>cv. Columbia</strain>
    </source>
</reference>
<reference key="6">
    <citation type="journal article" date="1999" name="Gene">
        <title>Characterisation of novel plant genes encoding MEKK/STE11 and RAF-related protein kinases.</title>
        <authorList>
            <person name="Jouannic S."/>
            <person name="Hamal A."/>
            <person name="Leprince A.-S."/>
            <person name="Tregear J.W."/>
            <person name="Kreis M."/>
            <person name="Henry Y."/>
        </authorList>
    </citation>
    <scope>NUCLEOTIDE SEQUENCE [MRNA] OF 26-560</scope>
    <scope>TISSUE SPECIFICITY</scope>
    <source>
        <strain>cv. Columbia</strain>
        <tissue>Seedling</tissue>
    </source>
</reference>
<reference key="7">
    <citation type="journal article" date="2002" name="Trends Plant Sci.">
        <title>Mitogen-activated protein kinase cascades in plants: a new nomenclature.</title>
        <authorList>
            <consortium name="MAPK group"/>
        </authorList>
    </citation>
    <scope>NOMENCLATURE</scope>
</reference>
<reference key="8">
    <citation type="journal article" date="2010" name="Plant Physiol.">
        <title>iTILLING: a personalized approach to the identification of induced mutations in Arabidopsis.</title>
        <authorList>
            <person name="Bush S.M."/>
            <person name="Krysan P.J."/>
        </authorList>
    </citation>
    <scope>DISRUPTION PHENOTYPE</scope>
</reference>
<keyword id="KW-0067">ATP-binding</keyword>
<keyword id="KW-0418">Kinase</keyword>
<keyword id="KW-0547">Nucleotide-binding</keyword>
<keyword id="KW-1185">Reference proteome</keyword>
<keyword id="KW-0723">Serine/threonine-protein kinase</keyword>
<keyword id="KW-0808">Transferase</keyword>
<proteinExistence type="evidence at transcript level"/>
<evidence type="ECO:0000250" key="1">
    <source>
        <dbReference type="UniProtKB" id="P53778"/>
    </source>
</evidence>
<evidence type="ECO:0000255" key="2">
    <source>
        <dbReference type="PROSITE-ProRule" id="PRU00159"/>
    </source>
</evidence>
<evidence type="ECO:0000256" key="3">
    <source>
        <dbReference type="SAM" id="MobiDB-lite"/>
    </source>
</evidence>
<evidence type="ECO:0000269" key="4">
    <source>
    </source>
</evidence>
<evidence type="ECO:0000269" key="5">
    <source>
    </source>
</evidence>
<evidence type="ECO:0000303" key="6">
    <source>
    </source>
</evidence>
<evidence type="ECO:0000303" key="7">
    <source>
    </source>
</evidence>
<evidence type="ECO:0000305" key="8"/>
<evidence type="ECO:0000312" key="9">
    <source>
        <dbReference type="Araport" id="AT4G08470"/>
    </source>
</evidence>
<evidence type="ECO:0000312" key="10">
    <source>
        <dbReference type="EMBL" id="AAC28187.1"/>
    </source>
</evidence>
<dbReference type="EC" id="2.7.11.25" evidence="1 2"/>
<dbReference type="EMBL" id="AF076275">
    <property type="protein sequence ID" value="AAC28187.1"/>
    <property type="status" value="ALT_SEQ"/>
    <property type="molecule type" value="Genomic_DNA"/>
</dbReference>
<dbReference type="EMBL" id="AL161511">
    <property type="protein sequence ID" value="CAB77972.1"/>
    <property type="molecule type" value="Genomic_DNA"/>
</dbReference>
<dbReference type="EMBL" id="CP002687">
    <property type="protein sequence ID" value="AEE82648.1"/>
    <property type="molecule type" value="Genomic_DNA"/>
</dbReference>
<dbReference type="EMBL" id="BT004308">
    <property type="protein sequence ID" value="AAO42306.1"/>
    <property type="molecule type" value="mRNA"/>
</dbReference>
<dbReference type="EMBL" id="BT021102">
    <property type="protein sequence ID" value="AAX12872.1"/>
    <property type="molecule type" value="mRNA"/>
</dbReference>
<dbReference type="EMBL" id="AK228648">
    <property type="protein sequence ID" value="BAF00555.1"/>
    <property type="molecule type" value="mRNA"/>
</dbReference>
<dbReference type="EMBL" id="AJ010092">
    <property type="protein sequence ID" value="CAA08996.1"/>
    <property type="molecule type" value="mRNA"/>
</dbReference>
<dbReference type="PIR" id="D85084">
    <property type="entry name" value="D85084"/>
</dbReference>
<dbReference type="PIR" id="T01836">
    <property type="entry name" value="T01836"/>
</dbReference>
<dbReference type="PIR" id="T51736">
    <property type="entry name" value="T51736"/>
</dbReference>
<dbReference type="RefSeq" id="NP_192587.1">
    <property type="nucleotide sequence ID" value="NM_116916.4"/>
</dbReference>
<dbReference type="SMR" id="Q9M0T3"/>
<dbReference type="FunCoup" id="Q9M0T3">
    <property type="interactions" value="341"/>
</dbReference>
<dbReference type="IntAct" id="Q9M0T3">
    <property type="interactions" value="3"/>
</dbReference>
<dbReference type="STRING" id="3702.Q9M0T3"/>
<dbReference type="GlyGen" id="Q9M0T3">
    <property type="glycosylation" value="1 site"/>
</dbReference>
<dbReference type="PaxDb" id="3702-AT4G08470.1"/>
<dbReference type="ProteomicsDB" id="239067"/>
<dbReference type="EnsemblPlants" id="AT4G08470.1">
    <property type="protein sequence ID" value="AT4G08470.1"/>
    <property type="gene ID" value="AT4G08470"/>
</dbReference>
<dbReference type="GeneID" id="826406"/>
<dbReference type="Gramene" id="AT4G08470.1">
    <property type="protein sequence ID" value="AT4G08470.1"/>
    <property type="gene ID" value="AT4G08470"/>
</dbReference>
<dbReference type="KEGG" id="ath:AT4G08470"/>
<dbReference type="Araport" id="AT4G08470"/>
<dbReference type="TAIR" id="AT4G08470">
    <property type="gene designation" value="MEKK3"/>
</dbReference>
<dbReference type="eggNOG" id="KOG0198">
    <property type="taxonomic scope" value="Eukaryota"/>
</dbReference>
<dbReference type="HOGENOM" id="CLU_486950_0_0_1"/>
<dbReference type="InParanoid" id="Q9M0T3"/>
<dbReference type="PhylomeDB" id="Q9M0T3"/>
<dbReference type="PRO" id="PR:Q9M0T3"/>
<dbReference type="Proteomes" id="UP000006548">
    <property type="component" value="Chromosome 4"/>
</dbReference>
<dbReference type="ExpressionAtlas" id="Q9M0T3">
    <property type="expression patterns" value="baseline and differential"/>
</dbReference>
<dbReference type="GO" id="GO:0005524">
    <property type="term" value="F:ATP binding"/>
    <property type="evidence" value="ECO:0007669"/>
    <property type="project" value="UniProtKB-KW"/>
</dbReference>
<dbReference type="GO" id="GO:0004709">
    <property type="term" value="F:MAP kinase kinase kinase activity"/>
    <property type="evidence" value="ECO:0007669"/>
    <property type="project" value="UniProtKB-EC"/>
</dbReference>
<dbReference type="GO" id="GO:0106310">
    <property type="term" value="F:protein serine kinase activity"/>
    <property type="evidence" value="ECO:0007669"/>
    <property type="project" value="RHEA"/>
</dbReference>
<dbReference type="FunFam" id="1.10.510.10:FF:000359">
    <property type="entry name" value="Mitogen-activated protein kinase 1, putative, expressed"/>
    <property type="match status" value="1"/>
</dbReference>
<dbReference type="Gene3D" id="1.10.510.10">
    <property type="entry name" value="Transferase(Phosphotransferase) domain 1"/>
    <property type="match status" value="1"/>
</dbReference>
<dbReference type="InterPro" id="IPR011009">
    <property type="entry name" value="Kinase-like_dom_sf"/>
</dbReference>
<dbReference type="InterPro" id="IPR050538">
    <property type="entry name" value="MAP_kinase_kinase_kinase"/>
</dbReference>
<dbReference type="InterPro" id="IPR000719">
    <property type="entry name" value="Prot_kinase_dom"/>
</dbReference>
<dbReference type="InterPro" id="IPR017441">
    <property type="entry name" value="Protein_kinase_ATP_BS"/>
</dbReference>
<dbReference type="InterPro" id="IPR008271">
    <property type="entry name" value="Ser/Thr_kinase_AS"/>
</dbReference>
<dbReference type="PANTHER" id="PTHR48016">
    <property type="entry name" value="MAP KINASE KINASE KINASE SSK2-RELATED-RELATED"/>
    <property type="match status" value="1"/>
</dbReference>
<dbReference type="PANTHER" id="PTHR48016:SF29">
    <property type="entry name" value="MITOGEN-ACTIVATED PROTEIN KINASE KINASE KINASE 1-RELATED"/>
    <property type="match status" value="1"/>
</dbReference>
<dbReference type="Pfam" id="PF00069">
    <property type="entry name" value="Pkinase"/>
    <property type="match status" value="1"/>
</dbReference>
<dbReference type="SMART" id="SM00220">
    <property type="entry name" value="S_TKc"/>
    <property type="match status" value="1"/>
</dbReference>
<dbReference type="SUPFAM" id="SSF56112">
    <property type="entry name" value="Protein kinase-like (PK-like)"/>
    <property type="match status" value="1"/>
</dbReference>
<dbReference type="PROSITE" id="PS00107">
    <property type="entry name" value="PROTEIN_KINASE_ATP"/>
    <property type="match status" value="1"/>
</dbReference>
<dbReference type="PROSITE" id="PS50011">
    <property type="entry name" value="PROTEIN_KINASE_DOM"/>
    <property type="match status" value="1"/>
</dbReference>
<dbReference type="PROSITE" id="PS00108">
    <property type="entry name" value="PROTEIN_KINASE_ST"/>
    <property type="match status" value="1"/>
</dbReference>
<accession>Q9M0T3</accession>
<accession>O81473</accession>
<accession>O82650</accession>
<accession>Q84W26</accession>
<protein>
    <recommendedName>
        <fullName evidence="7">Mitogen-activated protein kinase kinase kinase 3</fullName>
        <shortName evidence="7">MAP kinase kinase kinase 3</shortName>
        <ecNumber evidence="1 2">2.7.11.25</ecNumber>
    </recommendedName>
    <alternativeName>
        <fullName evidence="6">MAP3K beta 3 protein kinase</fullName>
        <shortName evidence="6">MAP3K beta 3</shortName>
    </alternativeName>
    <alternativeName>
        <fullName evidence="7">MAPK/ERK kinase kinase 3</fullName>
        <shortName evidence="7">AtMEKK3</shortName>
    </alternativeName>
</protein>
<comment type="catalytic activity">
    <reaction evidence="1">
        <text>L-seryl-[protein] + ATP = O-phospho-L-seryl-[protein] + ADP + H(+)</text>
        <dbReference type="Rhea" id="RHEA:17989"/>
        <dbReference type="Rhea" id="RHEA-COMP:9863"/>
        <dbReference type="Rhea" id="RHEA-COMP:11604"/>
        <dbReference type="ChEBI" id="CHEBI:15378"/>
        <dbReference type="ChEBI" id="CHEBI:29999"/>
        <dbReference type="ChEBI" id="CHEBI:30616"/>
        <dbReference type="ChEBI" id="CHEBI:83421"/>
        <dbReference type="ChEBI" id="CHEBI:456216"/>
        <dbReference type="EC" id="2.7.11.25"/>
    </reaction>
</comment>
<comment type="catalytic activity">
    <reaction evidence="1">
        <text>L-threonyl-[protein] + ATP = O-phospho-L-threonyl-[protein] + ADP + H(+)</text>
        <dbReference type="Rhea" id="RHEA:46608"/>
        <dbReference type="Rhea" id="RHEA-COMP:11060"/>
        <dbReference type="Rhea" id="RHEA-COMP:11605"/>
        <dbReference type="ChEBI" id="CHEBI:15378"/>
        <dbReference type="ChEBI" id="CHEBI:30013"/>
        <dbReference type="ChEBI" id="CHEBI:30616"/>
        <dbReference type="ChEBI" id="CHEBI:61977"/>
        <dbReference type="ChEBI" id="CHEBI:456216"/>
        <dbReference type="EC" id="2.7.11.25"/>
    </reaction>
</comment>
<comment type="tissue specificity">
    <text evidence="4">Expressed at low levels in roots, stems, siliques, leaves, seedlings and flower buds.</text>
</comment>
<comment type="disruption phenotype">
    <text evidence="5">No visible phenotype under standard growth conditions.</text>
</comment>
<comment type="similarity">
    <text evidence="8">Belongs to the protein kinase superfamily. STE Ser/Thr protein kinase family. MAP kinase kinase kinase subfamily.</text>
</comment>
<comment type="sequence caution" evidence="8">
    <conflict type="erroneous gene model prediction">
        <sequence resource="EMBL-CDS" id="AAC28187"/>
    </conflict>
</comment>
<feature type="chain" id="PRO_0000441879" description="Mitogen-activated protein kinase kinase kinase 3">
    <location>
        <begin position="1"/>
        <end position="560"/>
    </location>
</feature>
<feature type="domain" description="Protein kinase" evidence="2">
    <location>
        <begin position="303"/>
        <end position="557"/>
    </location>
</feature>
<feature type="region of interest" description="Disordered" evidence="3">
    <location>
        <begin position="70"/>
        <end position="91"/>
    </location>
</feature>
<feature type="active site" description="Proton acceptor" evidence="2">
    <location>
        <position position="426"/>
    </location>
</feature>
<feature type="binding site" evidence="2">
    <location>
        <begin position="309"/>
        <end position="317"/>
    </location>
    <ligand>
        <name>ATP</name>
        <dbReference type="ChEBI" id="CHEBI:30616"/>
    </ligand>
</feature>
<feature type="binding site" evidence="2">
    <location>
        <position position="331"/>
    </location>
    <ligand>
        <name>ATP</name>
        <dbReference type="ChEBI" id="CHEBI:30616"/>
    </ligand>
</feature>
<feature type="sequence conflict" description="In Ref. 6; CAA08996." evidence="8" ref="6">
    <original>L</original>
    <variation>F</variation>
    <location>
        <position position="60"/>
    </location>
</feature>
<feature type="sequence conflict" description="In Ref. 6; CAA08996." evidence="8" ref="6">
    <original>A</original>
    <variation>G</variation>
    <location>
        <position position="109"/>
    </location>
</feature>
<feature type="sequence conflict" description="In Ref. 3; AAO42306 and 5; BAF00555." evidence="8" ref="3 5">
    <original>D</original>
    <variation>A</variation>
    <location>
        <position position="269"/>
    </location>
</feature>
<feature type="sequence conflict" description="In Ref. 6; CAA08996." evidence="8" ref="6">
    <original>E</original>
    <variation>K</variation>
    <location>
        <position position="273"/>
    </location>
</feature>
<feature type="sequence conflict" description="In Ref. 6; CAA08996." evidence="8" ref="6">
    <original>G</original>
    <variation>R</variation>
    <location>
        <position position="421"/>
    </location>
</feature>
<name>MP3K3_ARATH</name>
<sequence length="560" mass="62308">MDVTAIFAGDILVQSREYLIPNDVVDVDGGIKAVRPPIIQPPPGRKLPLIDFPGSSWDFLTYFAPSKTVKRQSSSSSDNTSDKEEVETEETRGMFVQLGDTAHEACPFATNEADSSSTVSIISPSYASRGSIVPSWLKRKFLGRVSLGFVYEGSSGSSVGSESTCSLMTPSLEFPDRISFRKKDFSEKGPSRHVWEKRKLTRAKLIENFCNPEDIEPVTSWLKGQLLGEESFASVYEAISDSSVGSESTCSLMTPSMEFPDRISFRKRDFSEEGPSGRVKEKRKLMRNKLIENFRKPEDITSWLKGQLLGRGSYASVYEAISEDGDFFAVKEVSLLDKGIQAQECIQQLEGEIALLSQLQHQNIVRYRGTAKDVSKLYIFLELVTQGSVQKLYERYQLSYTVVSLYTRQILAGLNYLHDKGFVHRDIKCANMLVDANGTVKLADFGLAEASKFNDIMSCKGTLFWMAPEVINRKDSDGNGSPADIWSLGCTVLEMCTGQIPYSDLKPIQAAFKIGRGTLPDVPDTLSLDARHFILTCLKVNPEERPTAAELLHHPFVINL</sequence>